<feature type="chain" id="PRO_0000163533" description="Large ribosomal subunit protein bL19">
    <location>
        <begin position="1"/>
        <end position="116"/>
    </location>
</feature>
<dbReference type="EMBL" id="BA000033">
    <property type="protein sequence ID" value="BAB94989.1"/>
    <property type="molecule type" value="Genomic_DNA"/>
</dbReference>
<dbReference type="RefSeq" id="WP_000181404.1">
    <property type="nucleotide sequence ID" value="NC_003923.1"/>
</dbReference>
<dbReference type="PDB" id="8Y36">
    <property type="method" value="EM"/>
    <property type="resolution" value="2.65 A"/>
    <property type="chains" value="N=2-115"/>
</dbReference>
<dbReference type="PDB" id="8Y37">
    <property type="method" value="EM"/>
    <property type="resolution" value="2.53 A"/>
    <property type="chains" value="N=2-115"/>
</dbReference>
<dbReference type="PDB" id="8Y38">
    <property type="method" value="EM"/>
    <property type="resolution" value="2.58 A"/>
    <property type="chains" value="N=2-115"/>
</dbReference>
<dbReference type="PDB" id="8Y39">
    <property type="method" value="EM"/>
    <property type="resolution" value="3.60 A"/>
    <property type="chains" value="N=2-115"/>
</dbReference>
<dbReference type="PDBsum" id="8Y36"/>
<dbReference type="PDBsum" id="8Y37"/>
<dbReference type="PDBsum" id="8Y38"/>
<dbReference type="PDBsum" id="8Y39"/>
<dbReference type="EMDB" id="EMD-38873"/>
<dbReference type="EMDB" id="EMD-38874"/>
<dbReference type="EMDB" id="EMD-38875"/>
<dbReference type="EMDB" id="EMD-38876"/>
<dbReference type="SMR" id="Q8NX05"/>
<dbReference type="GeneID" id="98345556"/>
<dbReference type="KEGG" id="sam:MW1124"/>
<dbReference type="HOGENOM" id="CLU_103507_2_1_9"/>
<dbReference type="GO" id="GO:0022625">
    <property type="term" value="C:cytosolic large ribosomal subunit"/>
    <property type="evidence" value="ECO:0007669"/>
    <property type="project" value="TreeGrafter"/>
</dbReference>
<dbReference type="GO" id="GO:0003735">
    <property type="term" value="F:structural constituent of ribosome"/>
    <property type="evidence" value="ECO:0007669"/>
    <property type="project" value="InterPro"/>
</dbReference>
<dbReference type="GO" id="GO:0006412">
    <property type="term" value="P:translation"/>
    <property type="evidence" value="ECO:0007669"/>
    <property type="project" value="UniProtKB-UniRule"/>
</dbReference>
<dbReference type="FunFam" id="2.30.30.790:FF:000001">
    <property type="entry name" value="50S ribosomal protein L19"/>
    <property type="match status" value="1"/>
</dbReference>
<dbReference type="Gene3D" id="2.30.30.790">
    <property type="match status" value="1"/>
</dbReference>
<dbReference type="HAMAP" id="MF_00402">
    <property type="entry name" value="Ribosomal_bL19"/>
    <property type="match status" value="1"/>
</dbReference>
<dbReference type="InterPro" id="IPR001857">
    <property type="entry name" value="Ribosomal_bL19"/>
</dbReference>
<dbReference type="InterPro" id="IPR018257">
    <property type="entry name" value="Ribosomal_bL19_CS"/>
</dbReference>
<dbReference type="InterPro" id="IPR038657">
    <property type="entry name" value="Ribosomal_bL19_sf"/>
</dbReference>
<dbReference type="InterPro" id="IPR008991">
    <property type="entry name" value="Translation_prot_SH3-like_sf"/>
</dbReference>
<dbReference type="NCBIfam" id="TIGR01024">
    <property type="entry name" value="rplS_bact"/>
    <property type="match status" value="1"/>
</dbReference>
<dbReference type="PANTHER" id="PTHR15680:SF9">
    <property type="entry name" value="LARGE RIBOSOMAL SUBUNIT PROTEIN BL19M"/>
    <property type="match status" value="1"/>
</dbReference>
<dbReference type="PANTHER" id="PTHR15680">
    <property type="entry name" value="RIBOSOMAL PROTEIN L19"/>
    <property type="match status" value="1"/>
</dbReference>
<dbReference type="Pfam" id="PF01245">
    <property type="entry name" value="Ribosomal_L19"/>
    <property type="match status" value="1"/>
</dbReference>
<dbReference type="PIRSF" id="PIRSF002191">
    <property type="entry name" value="Ribosomal_L19"/>
    <property type="match status" value="1"/>
</dbReference>
<dbReference type="PRINTS" id="PR00061">
    <property type="entry name" value="RIBOSOMALL19"/>
</dbReference>
<dbReference type="SUPFAM" id="SSF50104">
    <property type="entry name" value="Translation proteins SH3-like domain"/>
    <property type="match status" value="1"/>
</dbReference>
<dbReference type="PROSITE" id="PS01015">
    <property type="entry name" value="RIBOSOMAL_L19"/>
    <property type="match status" value="1"/>
</dbReference>
<proteinExistence type="evidence at protein level"/>
<comment type="function">
    <text evidence="1">This protein is located at the 30S-50S ribosomal subunit interface and may play a role in the structure and function of the aminoacyl-tRNA binding site.</text>
</comment>
<comment type="similarity">
    <text evidence="1">Belongs to the bacterial ribosomal protein bL19 family.</text>
</comment>
<protein>
    <recommendedName>
        <fullName evidence="1">Large ribosomal subunit protein bL19</fullName>
    </recommendedName>
    <alternativeName>
        <fullName evidence="2">50S ribosomal protein L19</fullName>
    </alternativeName>
</protein>
<reference key="1">
    <citation type="journal article" date="2002" name="Lancet">
        <title>Genome and virulence determinants of high virulence community-acquired MRSA.</title>
        <authorList>
            <person name="Baba T."/>
            <person name="Takeuchi F."/>
            <person name="Kuroda M."/>
            <person name="Yuzawa H."/>
            <person name="Aoki K."/>
            <person name="Oguchi A."/>
            <person name="Nagai Y."/>
            <person name="Iwama N."/>
            <person name="Asano K."/>
            <person name="Naimi T."/>
            <person name="Kuroda H."/>
            <person name="Cui L."/>
            <person name="Yamamoto K."/>
            <person name="Hiramatsu K."/>
        </authorList>
    </citation>
    <scope>NUCLEOTIDE SEQUENCE [LARGE SCALE GENOMIC DNA]</scope>
    <source>
        <strain>MW2</strain>
    </source>
</reference>
<name>RL19_STAAW</name>
<organism>
    <name type="scientific">Staphylococcus aureus (strain MW2)</name>
    <dbReference type="NCBI Taxonomy" id="196620"/>
    <lineage>
        <taxon>Bacteria</taxon>
        <taxon>Bacillati</taxon>
        <taxon>Bacillota</taxon>
        <taxon>Bacilli</taxon>
        <taxon>Bacillales</taxon>
        <taxon>Staphylococcaceae</taxon>
        <taxon>Staphylococcus</taxon>
    </lineage>
</organism>
<evidence type="ECO:0000255" key="1">
    <source>
        <dbReference type="HAMAP-Rule" id="MF_00402"/>
    </source>
</evidence>
<evidence type="ECO:0000305" key="2"/>
<sequence length="116" mass="13362">MTNHKLIEAVTKSQLRTDLPSFRPGDTLRVHVRIIEGTRERIQVFEGVVIKRRGGGVSETFTVRKISSGVGVERTFPLHTPKIEKIEVKRRGKVRRAKLYYLRSLRGKAARIQEIR</sequence>
<keyword id="KW-0002">3D-structure</keyword>
<keyword id="KW-0687">Ribonucleoprotein</keyword>
<keyword id="KW-0689">Ribosomal protein</keyword>
<gene>
    <name evidence="1" type="primary">rplS</name>
    <name type="ordered locus">MW1124</name>
</gene>
<accession>Q8NX05</accession>